<name>SEMG2_PANTR</name>
<reference key="1">
    <citation type="journal article" date="2004" name="Nat. Genet.">
        <title>Rate of molecular evolution of the seminal protein gene SEMG2 correlates with levels of female promiscuity.</title>
        <authorList>
            <person name="Dorus S."/>
            <person name="Evans P.D."/>
            <person name="Wyckoff G.J."/>
            <person name="Choi S.S."/>
            <person name="Lahn B.T."/>
        </authorList>
    </citation>
    <scope>NUCLEOTIDE SEQUENCE [MRNA]</scope>
</reference>
<reference key="2">
    <citation type="journal article" date="2007" name="Genome Res.">
        <title>Comparative sequence analyses reveal rapid and divergent evolutionary changes of the WFDC locus in the primate lineage.</title>
        <authorList>
            <consortium name="NISC comparative sequencing program"/>
            <person name="Hurle B."/>
            <person name="Swanson W."/>
            <person name="Green E.D."/>
        </authorList>
    </citation>
    <scope>NUCLEOTIDE SEQUENCE [GENOMIC DNA]</scope>
</reference>
<dbReference type="EMBL" id="AY781386">
    <property type="protein sequence ID" value="AAV51944.1"/>
    <property type="molecule type" value="mRNA"/>
</dbReference>
<dbReference type="EMBL" id="DP000037">
    <property type="protein sequence ID" value="ABO52928.1"/>
    <property type="molecule type" value="Genomic_DNA"/>
</dbReference>
<dbReference type="RefSeq" id="NP_001009138.1">
    <property type="nucleotide sequence ID" value="NM_001009138.1"/>
</dbReference>
<dbReference type="STRING" id="9598.ENSPTRP00000054529"/>
<dbReference type="GeneID" id="493189"/>
<dbReference type="KEGG" id="ptr:493189"/>
<dbReference type="CTD" id="6407"/>
<dbReference type="InParanoid" id="Q5U7N4"/>
<dbReference type="OrthoDB" id="11625at9604"/>
<dbReference type="Proteomes" id="UP000002277">
    <property type="component" value="Unplaced"/>
</dbReference>
<dbReference type="GO" id="GO:0005576">
    <property type="term" value="C:extracellular region"/>
    <property type="evidence" value="ECO:0007669"/>
    <property type="project" value="UniProtKB-SubCell"/>
</dbReference>
<dbReference type="GO" id="GO:0050817">
    <property type="term" value="P:coagulation"/>
    <property type="evidence" value="ECO:0007669"/>
    <property type="project" value="InterPro"/>
</dbReference>
<dbReference type="GO" id="GO:1901318">
    <property type="term" value="P:negative regulation of flagellated sperm motility"/>
    <property type="evidence" value="ECO:0007669"/>
    <property type="project" value="InterPro"/>
</dbReference>
<dbReference type="GO" id="GO:0048240">
    <property type="term" value="P:sperm capacitation"/>
    <property type="evidence" value="ECO:0000318"/>
    <property type="project" value="GO_Central"/>
</dbReference>
<dbReference type="InterPro" id="IPR008836">
    <property type="entry name" value="Semenogelin"/>
</dbReference>
<dbReference type="PANTHER" id="PTHR10547:SF6">
    <property type="entry name" value="SEMENOGELIN-2"/>
    <property type="match status" value="1"/>
</dbReference>
<dbReference type="PANTHER" id="PTHR10547">
    <property type="entry name" value="SEMENOGELIN/SEMINAL VESICLE SECRETORY PROTEIN"/>
    <property type="match status" value="1"/>
</dbReference>
<dbReference type="Pfam" id="PF05474">
    <property type="entry name" value="Semenogelin"/>
    <property type="match status" value="1"/>
</dbReference>
<comment type="function">
    <text evidence="1">Participates in the formation of a gel matrix (sperm coagulum) entrapping the accessory gland secretions and ejaculated spermatozoa.</text>
</comment>
<comment type="subunit">
    <text evidence="1">Interacts with SERPINA5.</text>
</comment>
<comment type="subcellular location">
    <subcellularLocation>
        <location evidence="1">Secreted</location>
    </subcellularLocation>
</comment>
<comment type="similarity">
    <text evidence="4">Belongs to the semenogelin family.</text>
</comment>
<organism>
    <name type="scientific">Pan troglodytes</name>
    <name type="common">Chimpanzee</name>
    <dbReference type="NCBI Taxonomy" id="9598"/>
    <lineage>
        <taxon>Eukaryota</taxon>
        <taxon>Metazoa</taxon>
        <taxon>Chordata</taxon>
        <taxon>Craniata</taxon>
        <taxon>Vertebrata</taxon>
        <taxon>Euteleostomi</taxon>
        <taxon>Mammalia</taxon>
        <taxon>Eutheria</taxon>
        <taxon>Euarchontoglires</taxon>
        <taxon>Primates</taxon>
        <taxon>Haplorrhini</taxon>
        <taxon>Catarrhini</taxon>
        <taxon>Hominidae</taxon>
        <taxon>Pan</taxon>
    </lineage>
</organism>
<accession>Q5U7N4</accession>
<accession>A4K2P3</accession>
<sequence>MKSIILFVLSLVLILEKQAAVMGQKDGSKGQLPSGSSQFPHGQKGQHYFGQKDQQHTKSKGSFSIQHTYHVDINDHDQTRKSQQYDLNALHKVTKSKQHLDGSQQLLNYKQEGRDHDKSEGHFHMIVIHHKGGQAHCGTQNPSQDQGNSPSGKGLSSQYSNTEKRLWVHGLSKEQASASGAQKGRTQGGSQSSYVLQTEELVVNKQQLETKNSHQNKGHYQNVVDVREEHSGKLQTSLHPAHQDRLQHGPKDIFTTQDELLVYNKNQHQTKNLNQDQEHGQKAHKISYQSSRTEERQLNHGEKSVQKDVSKGSISIQTEEKIHGKSQNQVTIHSQDQEHGHKENKMSYQSSSTEERHLNCGEKGIQKGVSKGSISIQTEEQIHGKSQNXVRIPSQAQEYGRKENKIS</sequence>
<feature type="signal peptide" evidence="2">
    <location>
        <begin position="1"/>
        <end position="23"/>
    </location>
</feature>
<feature type="chain" id="PRO_0000032365" description="Semenogelin-2">
    <location>
        <begin position="24"/>
        <end position="407"/>
    </location>
</feature>
<feature type="region of interest" description="Disordered" evidence="3">
    <location>
        <begin position="25"/>
        <end position="60"/>
    </location>
</feature>
<feature type="region of interest" description="Disordered" evidence="3">
    <location>
        <begin position="133"/>
        <end position="158"/>
    </location>
</feature>
<feature type="region of interest" description="Disordered" evidence="3">
    <location>
        <begin position="173"/>
        <end position="192"/>
    </location>
</feature>
<feature type="region of interest" description="Disordered" evidence="3">
    <location>
        <begin position="272"/>
        <end position="407"/>
    </location>
</feature>
<feature type="compositionally biased region" description="Polar residues" evidence="3">
    <location>
        <begin position="31"/>
        <end position="40"/>
    </location>
</feature>
<feature type="compositionally biased region" description="Polar residues" evidence="3">
    <location>
        <begin position="137"/>
        <end position="158"/>
    </location>
</feature>
<feature type="compositionally biased region" description="Polar residues" evidence="3">
    <location>
        <begin position="174"/>
        <end position="192"/>
    </location>
</feature>
<feature type="compositionally biased region" description="Basic and acidic residues" evidence="3">
    <location>
        <begin position="292"/>
        <end position="310"/>
    </location>
</feature>
<feature type="compositionally biased region" description="Polar residues" evidence="3">
    <location>
        <begin position="325"/>
        <end position="334"/>
    </location>
</feature>
<feature type="compositionally biased region" description="Basic and acidic residues" evidence="3">
    <location>
        <begin position="335"/>
        <end position="345"/>
    </location>
</feature>
<feature type="compositionally biased region" description="Polar residues" evidence="3">
    <location>
        <begin position="372"/>
        <end position="397"/>
    </location>
</feature>
<feature type="sequence conflict" description="In Ref. 2; ABO52928." evidence="4" ref="2">
    <original>V</original>
    <variation>L</variation>
    <location>
        <position position="12"/>
    </location>
</feature>
<proteinExistence type="evidence at transcript level"/>
<gene>
    <name type="primary">SEMG2</name>
</gene>
<keyword id="KW-1185">Reference proteome</keyword>
<keyword id="KW-0677">Repeat</keyword>
<keyword id="KW-0964">Secreted</keyword>
<keyword id="KW-0732">Signal</keyword>
<protein>
    <recommendedName>
        <fullName>Semenogelin-2</fullName>
    </recommendedName>
    <alternativeName>
        <fullName>Semenogelin II</fullName>
        <shortName>SGII</shortName>
    </alternativeName>
</protein>
<evidence type="ECO:0000250" key="1"/>
<evidence type="ECO:0000255" key="2"/>
<evidence type="ECO:0000256" key="3">
    <source>
        <dbReference type="SAM" id="MobiDB-lite"/>
    </source>
</evidence>
<evidence type="ECO:0000305" key="4"/>